<protein>
    <recommendedName>
        <fullName>NADH-ubiquinone oxidoreductase chain 6</fullName>
        <ecNumber evidence="1">7.1.1.2</ecNumber>
    </recommendedName>
    <alternativeName>
        <fullName>NADH dehydrogenase subunit 6</fullName>
    </alternativeName>
</protein>
<reference key="1">
    <citation type="journal article" date="1990" name="J. Mol. Biol.">
        <title>Sequence and gene organization of the chicken mitochondrial genome. A novel gene order in higher vertebrates.</title>
        <authorList>
            <person name="Desjardins P."/>
            <person name="Morais R."/>
        </authorList>
    </citation>
    <scope>NUCLEOTIDE SEQUENCE [GENOMIC DNA]</scope>
    <source>
        <strain evidence="5">Red jungle fowl</strain>
    </source>
</reference>
<dbReference type="EC" id="7.1.1.2" evidence="1"/>
<dbReference type="EMBL" id="X52392">
    <property type="protein sequence ID" value="CAA36637.1"/>
    <property type="molecule type" value="Genomic_DNA"/>
</dbReference>
<dbReference type="PIR" id="S10199">
    <property type="entry name" value="S10199"/>
</dbReference>
<dbReference type="RefSeq" id="NP_006927.1">
    <property type="nucleotide sequence ID" value="NC_001323.1"/>
</dbReference>
<dbReference type="SMR" id="P18941"/>
<dbReference type="FunCoup" id="P18941">
    <property type="interactions" value="176"/>
</dbReference>
<dbReference type="STRING" id="9031.ENSGALP00000047587"/>
<dbReference type="PaxDb" id="9031-ENSGALP00000034624"/>
<dbReference type="Ensembl" id="ENSGALT00010000037.1">
    <property type="protein sequence ID" value="ENSGALP00010000014.1"/>
    <property type="gene ID" value="ENSGALG00010000037.1"/>
</dbReference>
<dbReference type="VEuPathDB" id="HostDB:geneid_63549497"/>
<dbReference type="eggNOG" id="ENOG502S2Q2">
    <property type="taxonomic scope" value="Eukaryota"/>
</dbReference>
<dbReference type="GeneTree" id="ENSGT00390000003988"/>
<dbReference type="HOGENOM" id="CLU_129718_0_0_1"/>
<dbReference type="InParanoid" id="P18941"/>
<dbReference type="OMA" id="WVIYDTG"/>
<dbReference type="OrthoDB" id="9837654at2759"/>
<dbReference type="PhylomeDB" id="P18941"/>
<dbReference type="TreeFam" id="TF343324"/>
<dbReference type="Reactome" id="R-GGA-611105">
    <property type="pathway name" value="Respiratory electron transport"/>
</dbReference>
<dbReference type="Reactome" id="R-GGA-6799198">
    <property type="pathway name" value="Complex I biogenesis"/>
</dbReference>
<dbReference type="PRO" id="PR:P18941"/>
<dbReference type="Proteomes" id="UP000000539">
    <property type="component" value="Mitochondrion MT"/>
</dbReference>
<dbReference type="Bgee" id="ENSGALG00000037838">
    <property type="expression patterns" value="Expressed in kidney and 13 other cell types or tissues"/>
</dbReference>
<dbReference type="GO" id="GO:0005743">
    <property type="term" value="C:mitochondrial inner membrane"/>
    <property type="evidence" value="ECO:0000250"/>
    <property type="project" value="UniProtKB"/>
</dbReference>
<dbReference type="GO" id="GO:0005739">
    <property type="term" value="C:mitochondrion"/>
    <property type="evidence" value="ECO:0000318"/>
    <property type="project" value="GO_Central"/>
</dbReference>
<dbReference type="GO" id="GO:0045271">
    <property type="term" value="C:respiratory chain complex I"/>
    <property type="evidence" value="ECO:0007669"/>
    <property type="project" value="Ensembl"/>
</dbReference>
<dbReference type="GO" id="GO:0008137">
    <property type="term" value="F:NADH dehydrogenase (ubiquinone) activity"/>
    <property type="evidence" value="ECO:0000250"/>
    <property type="project" value="UniProtKB"/>
</dbReference>
<dbReference type="GO" id="GO:0006120">
    <property type="term" value="P:mitochondrial electron transport, NADH to ubiquinone"/>
    <property type="evidence" value="ECO:0000250"/>
    <property type="project" value="UniProtKB"/>
</dbReference>
<dbReference type="GO" id="GO:0032981">
    <property type="term" value="P:mitochondrial respiratory chain complex I assembly"/>
    <property type="evidence" value="ECO:0000250"/>
    <property type="project" value="UniProtKB"/>
</dbReference>
<dbReference type="Gene3D" id="1.20.120.1200">
    <property type="entry name" value="NADH-ubiquinone/plastoquinone oxidoreductase chain 6, subunit NuoJ"/>
    <property type="match status" value="1"/>
</dbReference>
<dbReference type="InterPro" id="IPR050269">
    <property type="entry name" value="ComplexI_Subunit6"/>
</dbReference>
<dbReference type="InterPro" id="IPR001457">
    <property type="entry name" value="NADH_UbQ/plastoQ_OxRdtase_su6"/>
</dbReference>
<dbReference type="InterPro" id="IPR042106">
    <property type="entry name" value="Nuo/plastoQ_OxRdtase_6_NuoJ"/>
</dbReference>
<dbReference type="PANTHER" id="PTHR11435">
    <property type="entry name" value="NADH UBIQUINONE OXIDOREDUCTASE SUBUNIT ND6"/>
    <property type="match status" value="1"/>
</dbReference>
<dbReference type="PANTHER" id="PTHR11435:SF1">
    <property type="entry name" value="NADH-UBIQUINONE OXIDOREDUCTASE CHAIN 6"/>
    <property type="match status" value="1"/>
</dbReference>
<dbReference type="Pfam" id="PF00499">
    <property type="entry name" value="Oxidored_q3"/>
    <property type="match status" value="1"/>
</dbReference>
<evidence type="ECO:0000250" key="1">
    <source>
        <dbReference type="UniProtKB" id="P03923"/>
    </source>
</evidence>
<evidence type="ECO:0000250" key="2">
    <source>
        <dbReference type="UniProtKB" id="P03924"/>
    </source>
</evidence>
<evidence type="ECO:0000255" key="3"/>
<evidence type="ECO:0000305" key="4"/>
<evidence type="ECO:0000312" key="5">
    <source>
        <dbReference type="Proteomes" id="UP000000539"/>
    </source>
</evidence>
<accession>P18941</accession>
<feature type="chain" id="PRO_0000118266" description="NADH-ubiquinone oxidoreductase chain 6">
    <location>
        <begin position="1"/>
        <end position="173"/>
    </location>
</feature>
<feature type="transmembrane region" description="Helical" evidence="3">
    <location>
        <begin position="1"/>
        <end position="21"/>
    </location>
</feature>
<feature type="transmembrane region" description="Helical" evidence="3">
    <location>
        <begin position="27"/>
        <end position="47"/>
    </location>
</feature>
<feature type="transmembrane region" description="Helical" evidence="3">
    <location>
        <begin position="48"/>
        <end position="68"/>
    </location>
</feature>
<feature type="transmembrane region" description="Helical" evidence="3">
    <location>
        <begin position="87"/>
        <end position="107"/>
    </location>
</feature>
<feature type="transmembrane region" description="Helical" evidence="3">
    <location>
        <begin position="139"/>
        <end position="159"/>
    </location>
</feature>
<name>NU6M_CHICK</name>
<geneLocation type="mitochondrion"/>
<sequence length="173" mass="18226">MTYFVIFLGICFMLGVLAVASNPSPYYGVVGLVVASVMGCGWLVSLGVSFVSLALFLVYLGGMLVVFVYSVSLAADPYPEAWGDWRVVGYGLGFVLVVWMGVVLGGLVDFWKVGVVTVDGGGVSFARLDFSGVAVFYSCGVGLFLVAGWGLLLALFVVLELVRGLSRGAIRAV</sequence>
<gene>
    <name type="primary">MT-ND6</name>
    <name type="synonym">MTND6</name>
    <name type="synonym">NADH6</name>
    <name type="synonym">ND6</name>
</gene>
<organism>
    <name type="scientific">Gallus gallus</name>
    <name type="common">Chicken</name>
    <dbReference type="NCBI Taxonomy" id="9031"/>
    <lineage>
        <taxon>Eukaryota</taxon>
        <taxon>Metazoa</taxon>
        <taxon>Chordata</taxon>
        <taxon>Craniata</taxon>
        <taxon>Vertebrata</taxon>
        <taxon>Euteleostomi</taxon>
        <taxon>Archelosauria</taxon>
        <taxon>Archosauria</taxon>
        <taxon>Dinosauria</taxon>
        <taxon>Saurischia</taxon>
        <taxon>Theropoda</taxon>
        <taxon>Coelurosauria</taxon>
        <taxon>Aves</taxon>
        <taxon>Neognathae</taxon>
        <taxon>Galloanserae</taxon>
        <taxon>Galliformes</taxon>
        <taxon>Phasianidae</taxon>
        <taxon>Phasianinae</taxon>
        <taxon>Gallus</taxon>
    </lineage>
</organism>
<keyword id="KW-0249">Electron transport</keyword>
<keyword id="KW-0472">Membrane</keyword>
<keyword id="KW-0496">Mitochondrion</keyword>
<keyword id="KW-0999">Mitochondrion inner membrane</keyword>
<keyword id="KW-0520">NAD</keyword>
<keyword id="KW-1185">Reference proteome</keyword>
<keyword id="KW-0679">Respiratory chain</keyword>
<keyword id="KW-1278">Translocase</keyword>
<keyword id="KW-0812">Transmembrane</keyword>
<keyword id="KW-1133">Transmembrane helix</keyword>
<keyword id="KW-0813">Transport</keyword>
<keyword id="KW-0830">Ubiquinone</keyword>
<proteinExistence type="inferred from homology"/>
<comment type="function">
    <text evidence="1">Core subunit of the mitochondrial membrane respiratory chain NADH dehydrogenase (Complex I) which catalyzes electron transfer from NADH through the respiratory chain, using ubiquinone as an electron acceptor. Essential for the catalytic activity and assembly of complex I.</text>
</comment>
<comment type="catalytic activity">
    <reaction evidence="1">
        <text>a ubiquinone + NADH + 5 H(+)(in) = a ubiquinol + NAD(+) + 4 H(+)(out)</text>
        <dbReference type="Rhea" id="RHEA:29091"/>
        <dbReference type="Rhea" id="RHEA-COMP:9565"/>
        <dbReference type="Rhea" id="RHEA-COMP:9566"/>
        <dbReference type="ChEBI" id="CHEBI:15378"/>
        <dbReference type="ChEBI" id="CHEBI:16389"/>
        <dbReference type="ChEBI" id="CHEBI:17976"/>
        <dbReference type="ChEBI" id="CHEBI:57540"/>
        <dbReference type="ChEBI" id="CHEBI:57945"/>
        <dbReference type="EC" id="7.1.1.2"/>
    </reaction>
</comment>
<comment type="subunit">
    <text evidence="2">Core subunit of respiratory chain NADH dehydrogenase (Complex I) which is composed of 45 different subunits.</text>
</comment>
<comment type="subcellular location">
    <subcellularLocation>
        <location evidence="2">Mitochondrion inner membrane</location>
        <topology evidence="3">Multi-pass membrane protein</topology>
    </subcellularLocation>
</comment>
<comment type="similarity">
    <text evidence="4">Belongs to the complex I subunit 6 family.</text>
</comment>